<name>ATPF_STRA3</name>
<accession>Q8E5V2</accession>
<feature type="chain" id="PRO_0000368793" description="ATP synthase subunit b">
    <location>
        <begin position="1"/>
        <end position="165"/>
    </location>
</feature>
<feature type="transmembrane region" description="Helical" evidence="1">
    <location>
        <begin position="7"/>
        <end position="27"/>
    </location>
</feature>
<dbReference type="EMBL" id="AL766847">
    <property type="protein sequence ID" value="CAD46521.1"/>
    <property type="molecule type" value="Genomic_DNA"/>
</dbReference>
<dbReference type="RefSeq" id="WP_000025478.1">
    <property type="nucleotide sequence ID" value="NC_004368.1"/>
</dbReference>
<dbReference type="SMR" id="Q8E5V2"/>
<dbReference type="GeneID" id="66885809"/>
<dbReference type="KEGG" id="san:atpF"/>
<dbReference type="eggNOG" id="COG0711">
    <property type="taxonomic scope" value="Bacteria"/>
</dbReference>
<dbReference type="HOGENOM" id="CLU_079215_4_2_9"/>
<dbReference type="Proteomes" id="UP000000823">
    <property type="component" value="Chromosome"/>
</dbReference>
<dbReference type="GO" id="GO:0005886">
    <property type="term" value="C:plasma membrane"/>
    <property type="evidence" value="ECO:0007669"/>
    <property type="project" value="UniProtKB-SubCell"/>
</dbReference>
<dbReference type="GO" id="GO:0045259">
    <property type="term" value="C:proton-transporting ATP synthase complex"/>
    <property type="evidence" value="ECO:0007669"/>
    <property type="project" value="UniProtKB-KW"/>
</dbReference>
<dbReference type="GO" id="GO:0046933">
    <property type="term" value="F:proton-transporting ATP synthase activity, rotational mechanism"/>
    <property type="evidence" value="ECO:0007669"/>
    <property type="project" value="UniProtKB-UniRule"/>
</dbReference>
<dbReference type="GO" id="GO:0046961">
    <property type="term" value="F:proton-transporting ATPase activity, rotational mechanism"/>
    <property type="evidence" value="ECO:0007669"/>
    <property type="project" value="TreeGrafter"/>
</dbReference>
<dbReference type="CDD" id="cd06503">
    <property type="entry name" value="ATP-synt_Fo_b"/>
    <property type="match status" value="1"/>
</dbReference>
<dbReference type="Gene3D" id="6.10.250.1580">
    <property type="match status" value="1"/>
</dbReference>
<dbReference type="HAMAP" id="MF_01398">
    <property type="entry name" value="ATP_synth_b_bprime"/>
    <property type="match status" value="1"/>
</dbReference>
<dbReference type="InterPro" id="IPR028987">
    <property type="entry name" value="ATP_synth_B-like_membr_sf"/>
</dbReference>
<dbReference type="InterPro" id="IPR002146">
    <property type="entry name" value="ATP_synth_b/b'su_bac/chlpt"/>
</dbReference>
<dbReference type="InterPro" id="IPR005864">
    <property type="entry name" value="ATP_synth_F0_bsu_bac"/>
</dbReference>
<dbReference type="InterPro" id="IPR050059">
    <property type="entry name" value="ATP_synthase_B_chain"/>
</dbReference>
<dbReference type="NCBIfam" id="TIGR01144">
    <property type="entry name" value="ATP_synt_b"/>
    <property type="match status" value="1"/>
</dbReference>
<dbReference type="PANTHER" id="PTHR33445:SF1">
    <property type="entry name" value="ATP SYNTHASE SUBUNIT B"/>
    <property type="match status" value="1"/>
</dbReference>
<dbReference type="PANTHER" id="PTHR33445">
    <property type="entry name" value="ATP SYNTHASE SUBUNIT B', CHLOROPLASTIC"/>
    <property type="match status" value="1"/>
</dbReference>
<dbReference type="Pfam" id="PF00430">
    <property type="entry name" value="ATP-synt_B"/>
    <property type="match status" value="1"/>
</dbReference>
<dbReference type="SUPFAM" id="SSF81573">
    <property type="entry name" value="F1F0 ATP synthase subunit B, membrane domain"/>
    <property type="match status" value="1"/>
</dbReference>
<proteinExistence type="inferred from homology"/>
<reference key="1">
    <citation type="journal article" date="2002" name="Mol. Microbiol.">
        <title>Genome sequence of Streptococcus agalactiae, a pathogen causing invasive neonatal disease.</title>
        <authorList>
            <person name="Glaser P."/>
            <person name="Rusniok C."/>
            <person name="Buchrieser C."/>
            <person name="Chevalier F."/>
            <person name="Frangeul L."/>
            <person name="Msadek T."/>
            <person name="Zouine M."/>
            <person name="Couve E."/>
            <person name="Lalioui L."/>
            <person name="Poyart C."/>
            <person name="Trieu-Cuot P."/>
            <person name="Kunst F."/>
        </authorList>
    </citation>
    <scope>NUCLEOTIDE SEQUENCE [LARGE SCALE GENOMIC DNA]</scope>
    <source>
        <strain>NEM316</strain>
    </source>
</reference>
<comment type="function">
    <text evidence="1">F(1)F(0) ATP synthase produces ATP from ADP in the presence of a proton or sodium gradient. F-type ATPases consist of two structural domains, F(1) containing the extramembraneous catalytic core and F(0) containing the membrane proton channel, linked together by a central stalk and a peripheral stalk. During catalysis, ATP synthesis in the catalytic domain of F(1) is coupled via a rotary mechanism of the central stalk subunits to proton translocation.</text>
</comment>
<comment type="function">
    <text evidence="1">Component of the F(0) channel, it forms part of the peripheral stalk, linking F(1) to F(0).</text>
</comment>
<comment type="subunit">
    <text evidence="1">F-type ATPases have 2 components, F(1) - the catalytic core - and F(0) - the membrane proton channel. F(1) has five subunits: alpha(3), beta(3), gamma(1), delta(1), epsilon(1). F(0) has three main subunits: a(1), b(2) and c(10-14). The alpha and beta chains form an alternating ring which encloses part of the gamma chain. F(1) is attached to F(0) by a central stalk formed by the gamma and epsilon chains, while a peripheral stalk is formed by the delta and b chains.</text>
</comment>
<comment type="subcellular location">
    <subcellularLocation>
        <location evidence="1">Cell membrane</location>
        <topology evidence="1">Single-pass membrane protein</topology>
    </subcellularLocation>
</comment>
<comment type="similarity">
    <text evidence="1">Belongs to the ATPase B chain family.</text>
</comment>
<organism>
    <name type="scientific">Streptococcus agalactiae serotype III (strain NEM316)</name>
    <dbReference type="NCBI Taxonomy" id="211110"/>
    <lineage>
        <taxon>Bacteria</taxon>
        <taxon>Bacillati</taxon>
        <taxon>Bacillota</taxon>
        <taxon>Bacilli</taxon>
        <taxon>Lactobacillales</taxon>
        <taxon>Streptococcaceae</taxon>
        <taxon>Streptococcus</taxon>
    </lineage>
</organism>
<sequence length="165" mass="18057">MSILINSTTIGDIIIVSGSVLLLFILIKTFAWKQITGIFEAREQKIANDIDTAEQARQQAEAFATKREEELSNAKTEANQIIDNAKETGLAKGDQIISEAKTEADRLKEKAHQDIAQNKAEALADVKGEVADLTVLLAEKIMVSNLDKEAQSNLIDSYIKKLGDA</sequence>
<evidence type="ECO:0000255" key="1">
    <source>
        <dbReference type="HAMAP-Rule" id="MF_01398"/>
    </source>
</evidence>
<gene>
    <name evidence="1" type="primary">atpF</name>
    <name type="ordered locus">gbs0877</name>
</gene>
<keyword id="KW-0066">ATP synthesis</keyword>
<keyword id="KW-1003">Cell membrane</keyword>
<keyword id="KW-0138">CF(0)</keyword>
<keyword id="KW-0375">Hydrogen ion transport</keyword>
<keyword id="KW-0406">Ion transport</keyword>
<keyword id="KW-0472">Membrane</keyword>
<keyword id="KW-0812">Transmembrane</keyword>
<keyword id="KW-1133">Transmembrane helix</keyword>
<keyword id="KW-0813">Transport</keyword>
<protein>
    <recommendedName>
        <fullName evidence="1">ATP synthase subunit b</fullName>
    </recommendedName>
    <alternativeName>
        <fullName evidence="1">ATP synthase F(0) sector subunit b</fullName>
    </alternativeName>
    <alternativeName>
        <fullName evidence="1">ATPase subunit I</fullName>
    </alternativeName>
    <alternativeName>
        <fullName evidence="1">F-type ATPase subunit b</fullName>
        <shortName evidence="1">F-ATPase subunit b</shortName>
    </alternativeName>
</protein>